<accession>Q8EP84</accession>
<gene>
    <name evidence="1" type="primary">murC</name>
    <name type="ordered locus">OB2231</name>
</gene>
<reference key="1">
    <citation type="journal article" date="2002" name="Nucleic Acids Res.">
        <title>Genome sequence of Oceanobacillus iheyensis isolated from the Iheya Ridge and its unexpected adaptive capabilities to extreme environments.</title>
        <authorList>
            <person name="Takami H."/>
            <person name="Takaki Y."/>
            <person name="Uchiyama I."/>
        </authorList>
    </citation>
    <scope>NUCLEOTIDE SEQUENCE [LARGE SCALE GENOMIC DNA]</scope>
    <source>
        <strain>DSM 14371 / CIP 107618 / JCM 11309 / KCTC 3954 / HTE831</strain>
    </source>
</reference>
<feature type="chain" id="PRO_0000182125" description="UDP-N-acetylmuramate--L-alanine ligase">
    <location>
        <begin position="1"/>
        <end position="438"/>
    </location>
</feature>
<feature type="binding site" evidence="1">
    <location>
        <begin position="108"/>
        <end position="114"/>
    </location>
    <ligand>
        <name>ATP</name>
        <dbReference type="ChEBI" id="CHEBI:30616"/>
    </ligand>
</feature>
<organism>
    <name type="scientific">Oceanobacillus iheyensis (strain DSM 14371 / CIP 107618 / JCM 11309 / KCTC 3954 / HTE831)</name>
    <dbReference type="NCBI Taxonomy" id="221109"/>
    <lineage>
        <taxon>Bacteria</taxon>
        <taxon>Bacillati</taxon>
        <taxon>Bacillota</taxon>
        <taxon>Bacilli</taxon>
        <taxon>Bacillales</taxon>
        <taxon>Bacillaceae</taxon>
        <taxon>Oceanobacillus</taxon>
    </lineage>
</organism>
<keyword id="KW-0067">ATP-binding</keyword>
<keyword id="KW-0131">Cell cycle</keyword>
<keyword id="KW-0132">Cell division</keyword>
<keyword id="KW-0133">Cell shape</keyword>
<keyword id="KW-0961">Cell wall biogenesis/degradation</keyword>
<keyword id="KW-0963">Cytoplasm</keyword>
<keyword id="KW-0436">Ligase</keyword>
<keyword id="KW-0547">Nucleotide-binding</keyword>
<keyword id="KW-0573">Peptidoglycan synthesis</keyword>
<keyword id="KW-1185">Reference proteome</keyword>
<proteinExistence type="inferred from homology"/>
<sequence length="438" mass="49863">MTTYHFIGIKGTGMSALAQILHDSGEKVQGSDFEKRFFTQEALEQKNITILPFSKENIKEDYTIIAGNAFSDDHIEIQKAKELGCKFYRYHEFLGEWLKQYTSIAVTGAHGKTSTTGLLSHVLKSAYPISYLIGDGTGNGHVDSEYFVFEACEYRRHFLKYEPDYAIMTNIDFDHPDYFTSLDDVVDAFQSMADRVKKCIVACGDDEQLQGIHTKVPVIYYGFNDSNDFQAQNVVETANGTEFDVFVRNTYYDHFIIPTYGNHTVLNALAVIAICHYEGISVEHMKQLDTFEGVKRRFTEKEIGSQIVIDDYAHHPKEISVTIESARKKYPNKNVVAIFQPHTFTRTKTFLKEFADSLNEADNVYLCDIFKSAREDSGQLTINDLQKLIPNSQLLSLKETEVLQEFKDSVLIFMGAGDIQKFQAAYEETTTKSTNFQD</sequence>
<name>MURC_OCEIH</name>
<dbReference type="EC" id="6.3.2.8" evidence="1"/>
<dbReference type="EMBL" id="BA000028">
    <property type="protein sequence ID" value="BAC14187.1"/>
    <property type="molecule type" value="Genomic_DNA"/>
</dbReference>
<dbReference type="RefSeq" id="WP_011066625.1">
    <property type="nucleotide sequence ID" value="NC_004193.1"/>
</dbReference>
<dbReference type="SMR" id="Q8EP84"/>
<dbReference type="STRING" id="221109.gene:10734479"/>
<dbReference type="KEGG" id="oih:OB2231"/>
<dbReference type="eggNOG" id="COG0773">
    <property type="taxonomic scope" value="Bacteria"/>
</dbReference>
<dbReference type="HOGENOM" id="CLU_028104_1_0_9"/>
<dbReference type="OrthoDB" id="9804126at2"/>
<dbReference type="PhylomeDB" id="Q8EP84"/>
<dbReference type="UniPathway" id="UPA00219"/>
<dbReference type="Proteomes" id="UP000000822">
    <property type="component" value="Chromosome"/>
</dbReference>
<dbReference type="GO" id="GO:0005737">
    <property type="term" value="C:cytoplasm"/>
    <property type="evidence" value="ECO:0007669"/>
    <property type="project" value="UniProtKB-SubCell"/>
</dbReference>
<dbReference type="GO" id="GO:0005524">
    <property type="term" value="F:ATP binding"/>
    <property type="evidence" value="ECO:0007669"/>
    <property type="project" value="UniProtKB-UniRule"/>
</dbReference>
<dbReference type="GO" id="GO:0008763">
    <property type="term" value="F:UDP-N-acetylmuramate-L-alanine ligase activity"/>
    <property type="evidence" value="ECO:0007669"/>
    <property type="project" value="UniProtKB-UniRule"/>
</dbReference>
<dbReference type="GO" id="GO:0051301">
    <property type="term" value="P:cell division"/>
    <property type="evidence" value="ECO:0007669"/>
    <property type="project" value="UniProtKB-KW"/>
</dbReference>
<dbReference type="GO" id="GO:0071555">
    <property type="term" value="P:cell wall organization"/>
    <property type="evidence" value="ECO:0007669"/>
    <property type="project" value="UniProtKB-KW"/>
</dbReference>
<dbReference type="GO" id="GO:0009252">
    <property type="term" value="P:peptidoglycan biosynthetic process"/>
    <property type="evidence" value="ECO:0007669"/>
    <property type="project" value="UniProtKB-UniRule"/>
</dbReference>
<dbReference type="GO" id="GO:0008360">
    <property type="term" value="P:regulation of cell shape"/>
    <property type="evidence" value="ECO:0007669"/>
    <property type="project" value="UniProtKB-KW"/>
</dbReference>
<dbReference type="Gene3D" id="3.90.190.20">
    <property type="entry name" value="Mur ligase, C-terminal domain"/>
    <property type="match status" value="1"/>
</dbReference>
<dbReference type="Gene3D" id="3.40.1190.10">
    <property type="entry name" value="Mur-like, catalytic domain"/>
    <property type="match status" value="1"/>
</dbReference>
<dbReference type="Gene3D" id="3.40.50.720">
    <property type="entry name" value="NAD(P)-binding Rossmann-like Domain"/>
    <property type="match status" value="1"/>
</dbReference>
<dbReference type="HAMAP" id="MF_00046">
    <property type="entry name" value="MurC"/>
    <property type="match status" value="1"/>
</dbReference>
<dbReference type="InterPro" id="IPR036565">
    <property type="entry name" value="Mur-like_cat_sf"/>
</dbReference>
<dbReference type="InterPro" id="IPR004101">
    <property type="entry name" value="Mur_ligase_C"/>
</dbReference>
<dbReference type="InterPro" id="IPR036615">
    <property type="entry name" value="Mur_ligase_C_dom_sf"/>
</dbReference>
<dbReference type="InterPro" id="IPR013221">
    <property type="entry name" value="Mur_ligase_cen"/>
</dbReference>
<dbReference type="InterPro" id="IPR000713">
    <property type="entry name" value="Mur_ligase_N"/>
</dbReference>
<dbReference type="InterPro" id="IPR050061">
    <property type="entry name" value="MurCDEF_pg_biosynth"/>
</dbReference>
<dbReference type="InterPro" id="IPR005758">
    <property type="entry name" value="UDP-N-AcMur_Ala_ligase_MurC"/>
</dbReference>
<dbReference type="NCBIfam" id="TIGR01082">
    <property type="entry name" value="murC"/>
    <property type="match status" value="1"/>
</dbReference>
<dbReference type="PANTHER" id="PTHR43445:SF3">
    <property type="entry name" value="UDP-N-ACETYLMURAMATE--L-ALANINE LIGASE"/>
    <property type="match status" value="1"/>
</dbReference>
<dbReference type="PANTHER" id="PTHR43445">
    <property type="entry name" value="UDP-N-ACETYLMURAMATE--L-ALANINE LIGASE-RELATED"/>
    <property type="match status" value="1"/>
</dbReference>
<dbReference type="Pfam" id="PF01225">
    <property type="entry name" value="Mur_ligase"/>
    <property type="match status" value="1"/>
</dbReference>
<dbReference type="Pfam" id="PF02875">
    <property type="entry name" value="Mur_ligase_C"/>
    <property type="match status" value="1"/>
</dbReference>
<dbReference type="Pfam" id="PF08245">
    <property type="entry name" value="Mur_ligase_M"/>
    <property type="match status" value="1"/>
</dbReference>
<dbReference type="SUPFAM" id="SSF51984">
    <property type="entry name" value="MurCD N-terminal domain"/>
    <property type="match status" value="1"/>
</dbReference>
<dbReference type="SUPFAM" id="SSF53623">
    <property type="entry name" value="MurD-like peptide ligases, catalytic domain"/>
    <property type="match status" value="1"/>
</dbReference>
<dbReference type="SUPFAM" id="SSF53244">
    <property type="entry name" value="MurD-like peptide ligases, peptide-binding domain"/>
    <property type="match status" value="1"/>
</dbReference>
<comment type="function">
    <text evidence="1">Cell wall formation.</text>
</comment>
<comment type="catalytic activity">
    <reaction evidence="1">
        <text>UDP-N-acetyl-alpha-D-muramate + L-alanine + ATP = UDP-N-acetyl-alpha-D-muramoyl-L-alanine + ADP + phosphate + H(+)</text>
        <dbReference type="Rhea" id="RHEA:23372"/>
        <dbReference type="ChEBI" id="CHEBI:15378"/>
        <dbReference type="ChEBI" id="CHEBI:30616"/>
        <dbReference type="ChEBI" id="CHEBI:43474"/>
        <dbReference type="ChEBI" id="CHEBI:57972"/>
        <dbReference type="ChEBI" id="CHEBI:70757"/>
        <dbReference type="ChEBI" id="CHEBI:83898"/>
        <dbReference type="ChEBI" id="CHEBI:456216"/>
        <dbReference type="EC" id="6.3.2.8"/>
    </reaction>
</comment>
<comment type="pathway">
    <text evidence="1">Cell wall biogenesis; peptidoglycan biosynthesis.</text>
</comment>
<comment type="subcellular location">
    <subcellularLocation>
        <location evidence="1">Cytoplasm</location>
    </subcellularLocation>
</comment>
<comment type="similarity">
    <text evidence="1">Belongs to the MurCDEF family.</text>
</comment>
<evidence type="ECO:0000255" key="1">
    <source>
        <dbReference type="HAMAP-Rule" id="MF_00046"/>
    </source>
</evidence>
<protein>
    <recommendedName>
        <fullName evidence="1">UDP-N-acetylmuramate--L-alanine ligase</fullName>
        <ecNumber evidence="1">6.3.2.8</ecNumber>
    </recommendedName>
    <alternativeName>
        <fullName evidence="1">UDP-N-acetylmuramoyl-L-alanine synthetase</fullName>
    </alternativeName>
</protein>